<protein>
    <recommendedName>
        <fullName>Unknown protein from spot 110 of 2D-PAGE of thylakoid</fullName>
    </recommendedName>
</protein>
<proteinExistence type="evidence at protein level"/>
<comment type="subcellular location">
    <subcellularLocation>
        <location evidence="1">Plastid</location>
        <location evidence="1">Chloroplast thylakoid</location>
    </subcellularLocation>
</comment>
<comment type="miscellaneous">
    <text evidence="1">On the 2D-gel the determined pI of this protein is: 6.0, its MW is: 21.3 kDa.</text>
</comment>
<organism>
    <name type="scientific">Pisum sativum</name>
    <name type="common">Garden pea</name>
    <name type="synonym">Lathyrus oleraceus</name>
    <dbReference type="NCBI Taxonomy" id="3888"/>
    <lineage>
        <taxon>Eukaryota</taxon>
        <taxon>Viridiplantae</taxon>
        <taxon>Streptophyta</taxon>
        <taxon>Embryophyta</taxon>
        <taxon>Tracheophyta</taxon>
        <taxon>Spermatophyta</taxon>
        <taxon>Magnoliopsida</taxon>
        <taxon>eudicotyledons</taxon>
        <taxon>Gunneridae</taxon>
        <taxon>Pentapetalae</taxon>
        <taxon>rosids</taxon>
        <taxon>fabids</taxon>
        <taxon>Fabales</taxon>
        <taxon>Fabaceae</taxon>
        <taxon>Papilionoideae</taxon>
        <taxon>50 kb inversion clade</taxon>
        <taxon>NPAAA clade</taxon>
        <taxon>Hologalegina</taxon>
        <taxon>IRL clade</taxon>
        <taxon>Fabeae</taxon>
        <taxon>Pisum</taxon>
    </lineage>
</organism>
<evidence type="ECO:0000269" key="1">
    <source>
    </source>
</evidence>
<evidence type="ECO:0000303" key="2">
    <source>
    </source>
</evidence>
<evidence type="ECO:0000305" key="3"/>
<feature type="chain" id="PRO_0000234472" description="Unknown protein from spot 110 of 2D-PAGE of thylakoid">
    <location>
        <begin position="1"/>
        <end position="12" status="greater than"/>
    </location>
</feature>
<feature type="non-terminal residue" evidence="2">
    <location>
        <position position="12"/>
    </location>
</feature>
<dbReference type="GO" id="GO:0009534">
    <property type="term" value="C:chloroplast thylakoid"/>
    <property type="evidence" value="ECO:0007669"/>
    <property type="project" value="UniProtKB-SubCell"/>
</dbReference>
<keyword id="KW-0150">Chloroplast</keyword>
<keyword id="KW-0903">Direct protein sequencing</keyword>
<keyword id="KW-0934">Plastid</keyword>
<keyword id="KW-0793">Thylakoid</keyword>
<reference evidence="3" key="1">
    <citation type="journal article" date="2000" name="Plant Cell">
        <title>Proteomics of the chloroplast: systematic identification and targeting analysis of lumenal and peripheral thylakoid proteins.</title>
        <authorList>
            <person name="Peltier J.-B."/>
            <person name="Friso G."/>
            <person name="Kalume D.E."/>
            <person name="Roepstorff P."/>
            <person name="Nilsson F."/>
            <person name="Adamska I."/>
            <person name="van Wijk K.J."/>
        </authorList>
    </citation>
    <scope>PROTEIN SEQUENCE</scope>
    <scope>SUBCELLULAR LOCATION</scope>
    <source>
        <strain evidence="1">cv. De Grace</strain>
        <tissue evidence="1">Leaf</tissue>
    </source>
</reference>
<name>UT110_PEA</name>
<sequence length="12" mass="1264">AGLPTEEKPPLL</sequence>
<accession>P82328</accession>